<protein>
    <recommendedName>
        <fullName evidence="2">Large ribosomal subunit protein eL21</fullName>
    </recommendedName>
    <alternativeName>
        <fullName>50S ribosomal protein L21e</fullName>
    </alternativeName>
</protein>
<organism>
    <name type="scientific">Pyrococcus abyssi (strain GE5 / Orsay)</name>
    <dbReference type="NCBI Taxonomy" id="272844"/>
    <lineage>
        <taxon>Archaea</taxon>
        <taxon>Methanobacteriati</taxon>
        <taxon>Methanobacteriota</taxon>
        <taxon>Thermococci</taxon>
        <taxon>Thermococcales</taxon>
        <taxon>Thermococcaceae</taxon>
        <taxon>Pyrococcus</taxon>
    </lineage>
</organism>
<comment type="similarity">
    <text evidence="2">Belongs to the eukaryotic ribosomal protein eL21 family.</text>
</comment>
<reference key="1">
    <citation type="journal article" date="2003" name="Mol. Microbiol.">
        <title>An integrated analysis of the genome of the hyperthermophilic archaeon Pyrococcus abyssi.</title>
        <authorList>
            <person name="Cohen G.N."/>
            <person name="Barbe V."/>
            <person name="Flament D."/>
            <person name="Galperin M."/>
            <person name="Heilig R."/>
            <person name="Lecompte O."/>
            <person name="Poch O."/>
            <person name="Prieur D."/>
            <person name="Querellou J."/>
            <person name="Ripp R."/>
            <person name="Thierry J.-C."/>
            <person name="Van der Oost J."/>
            <person name="Weissenbach J."/>
            <person name="Zivanovic Y."/>
            <person name="Forterre P."/>
        </authorList>
    </citation>
    <scope>NUCLEOTIDE SEQUENCE [LARGE SCALE GENOMIC DNA]</scope>
    <source>
        <strain>GE5 / Orsay</strain>
    </source>
</reference>
<reference key="2">
    <citation type="journal article" date="2012" name="Curr. Microbiol.">
        <title>Re-annotation of two hyperthermophilic archaea Pyrococcus abyssi GE5 and Pyrococcus furiosus DSM 3638.</title>
        <authorList>
            <person name="Gao J."/>
            <person name="Wang J."/>
        </authorList>
    </citation>
    <scope>GENOME REANNOTATION</scope>
    <source>
        <strain>GE5 / Orsay</strain>
    </source>
</reference>
<dbReference type="EMBL" id="AJ248286">
    <property type="protein sequence ID" value="CAB50016.1"/>
    <property type="molecule type" value="Genomic_DNA"/>
</dbReference>
<dbReference type="EMBL" id="HE613800">
    <property type="protein sequence ID" value="CCE70519.1"/>
    <property type="molecule type" value="Genomic_DNA"/>
</dbReference>
<dbReference type="PIR" id="C75089">
    <property type="entry name" value="C75089"/>
</dbReference>
<dbReference type="RefSeq" id="WP_010868223.1">
    <property type="nucleotide sequence ID" value="NC_000868.1"/>
</dbReference>
<dbReference type="SMR" id="Q9UZP1"/>
<dbReference type="STRING" id="272844.PAB0731"/>
<dbReference type="KEGG" id="pab:PAB0731"/>
<dbReference type="PATRIC" id="fig|272844.11.peg.1162"/>
<dbReference type="eggNOG" id="arCOG04129">
    <property type="taxonomic scope" value="Archaea"/>
</dbReference>
<dbReference type="HOGENOM" id="CLU_103610_1_1_2"/>
<dbReference type="OrthoDB" id="6295at2157"/>
<dbReference type="PhylomeDB" id="Q9UZP1"/>
<dbReference type="Proteomes" id="UP000000810">
    <property type="component" value="Chromosome"/>
</dbReference>
<dbReference type="Proteomes" id="UP000009139">
    <property type="component" value="Chromosome"/>
</dbReference>
<dbReference type="GO" id="GO:1990904">
    <property type="term" value="C:ribonucleoprotein complex"/>
    <property type="evidence" value="ECO:0007669"/>
    <property type="project" value="UniProtKB-KW"/>
</dbReference>
<dbReference type="GO" id="GO:0005840">
    <property type="term" value="C:ribosome"/>
    <property type="evidence" value="ECO:0007669"/>
    <property type="project" value="UniProtKB-KW"/>
</dbReference>
<dbReference type="GO" id="GO:0003735">
    <property type="term" value="F:structural constituent of ribosome"/>
    <property type="evidence" value="ECO:0007669"/>
    <property type="project" value="InterPro"/>
</dbReference>
<dbReference type="GO" id="GO:0006412">
    <property type="term" value="P:translation"/>
    <property type="evidence" value="ECO:0007669"/>
    <property type="project" value="UniProtKB-UniRule"/>
</dbReference>
<dbReference type="FunFam" id="2.30.30.70:FF:000001">
    <property type="entry name" value="60S ribosomal protein L21"/>
    <property type="match status" value="1"/>
</dbReference>
<dbReference type="Gene3D" id="2.30.30.70">
    <property type="entry name" value="Ribosomal protein L21"/>
    <property type="match status" value="1"/>
</dbReference>
<dbReference type="HAMAP" id="MF_00369">
    <property type="entry name" value="Ribosomal_eL21"/>
    <property type="match status" value="1"/>
</dbReference>
<dbReference type="InterPro" id="IPR001147">
    <property type="entry name" value="Ribosomal_eL21"/>
</dbReference>
<dbReference type="InterPro" id="IPR022856">
    <property type="entry name" value="Ribosomal_eL21_arc"/>
</dbReference>
<dbReference type="InterPro" id="IPR018259">
    <property type="entry name" value="Ribosomal_eL21_CS"/>
</dbReference>
<dbReference type="InterPro" id="IPR036948">
    <property type="entry name" value="Ribosomal_eL21_sf"/>
</dbReference>
<dbReference type="InterPro" id="IPR008991">
    <property type="entry name" value="Translation_prot_SH3-like_sf"/>
</dbReference>
<dbReference type="NCBIfam" id="NF003303">
    <property type="entry name" value="PRK04306.1"/>
    <property type="match status" value="1"/>
</dbReference>
<dbReference type="PANTHER" id="PTHR20981">
    <property type="entry name" value="60S RIBOSOMAL PROTEIN L21"/>
    <property type="match status" value="1"/>
</dbReference>
<dbReference type="Pfam" id="PF01157">
    <property type="entry name" value="Ribosomal_L21e"/>
    <property type="match status" value="1"/>
</dbReference>
<dbReference type="SUPFAM" id="SSF50104">
    <property type="entry name" value="Translation proteins SH3-like domain"/>
    <property type="match status" value="1"/>
</dbReference>
<dbReference type="PROSITE" id="PS01171">
    <property type="entry name" value="RIBOSOMAL_L21E"/>
    <property type="match status" value="1"/>
</dbReference>
<gene>
    <name type="primary">rpl21e</name>
    <name type="ordered locus">PYRAB11050</name>
    <name type="ORF">PAB0731</name>
</gene>
<accession>Q9UZP1</accession>
<accession>G8ZJR0</accession>
<evidence type="ECO:0000256" key="1">
    <source>
        <dbReference type="SAM" id="MobiDB-lite"/>
    </source>
</evidence>
<evidence type="ECO:0000305" key="2"/>
<keyword id="KW-0687">Ribonucleoprotein</keyword>
<keyword id="KW-0689">Ribosomal protein</keyword>
<name>RL21_PYRAB</name>
<sequence length="97" mass="11378">MVQKAHSFRRKTRKKLRKHPRRRGLPPLTRFLQEFEVGQRVHIVIEPSYHKGMPDPRFHGRTGTVVGKRGDAYIVEVPDGNKVKTLFIHPVHLRPQK</sequence>
<feature type="chain" id="PRO_0000149696" description="Large ribosomal subunit protein eL21">
    <location>
        <begin position="1"/>
        <end position="97"/>
    </location>
</feature>
<feature type="region of interest" description="Disordered" evidence="1">
    <location>
        <begin position="1"/>
        <end position="25"/>
    </location>
</feature>
<feature type="compositionally biased region" description="Basic residues" evidence="1">
    <location>
        <begin position="1"/>
        <end position="24"/>
    </location>
</feature>
<proteinExistence type="inferred from homology"/>